<gene>
    <name type="primary">trpE</name>
</gene>
<reference key="1">
    <citation type="journal article" date="1991" name="Biochim. Biophys. Acta">
        <title>Nucleotide sequence of trpE, anthranilate synthase I gene, of Bacillus caldotenax.</title>
        <authorList>
            <person name="Shiratsuchi A."/>
            <person name="Sato S."/>
        </authorList>
    </citation>
    <scope>NUCLEOTIDE SEQUENCE [GENOMIC DNA]</scope>
</reference>
<proteinExistence type="inferred from homology"/>
<name>TRPE_BACCA</name>
<evidence type="ECO:0000250" key="1"/>
<evidence type="ECO:0000250" key="2">
    <source>
        <dbReference type="UniProtKB" id="P00897"/>
    </source>
</evidence>
<evidence type="ECO:0000305" key="3"/>
<accession>P30526</accession>
<sequence length="508" mass="56493">MSADGLAAFLAEANEFRTIPIVRKFVADVIEPLGVFANLREEAVFLLESKDDESPWARYSFIGVAPFLTLESETGETFSVKDENGNEQITAPTLKEAFQWVERTLAVKPLAETVPFTGGAVGFLGYDFISAIEKVPRHKNRDVPMKTAYFVFCESLFAFDQKKRELLVIHYIRLSGNETEEEKIEAYRAAERRMADLAAKAARPQAEQPLLPAESESGRTASFAKAVSNYDKKQFLRDVEAVKRYIAAGDVFQAVLSQRFCVPVQAGGFAIYRLLRYINPSPYMFYFQLDGVEIVGSSPEKLIQVHRRRVEIDPIAGTRRRGRSPEEDERLADELYHDPKERAEHYMLVDLARNDIGRVAKYGTVEVPVLLQIGKFSHVMHLISKVVGELDDNVHPIDALLAAFPAGTVSGAPKVRAMQILQELEPTARGLYAGAIAYIGFDGNIDSCIAIRTAVVKDGYAYVQAGAGIVADSVPELEWKETRNKASALMNAIEQAERLFAKGERAVC</sequence>
<dbReference type="EC" id="4.1.3.27"/>
<dbReference type="EMBL" id="X55703">
    <property type="protein sequence ID" value="CAA39230.1"/>
    <property type="molecule type" value="Genomic_DNA"/>
</dbReference>
<dbReference type="PIR" id="S19266">
    <property type="entry name" value="S19266"/>
</dbReference>
<dbReference type="SMR" id="P30526"/>
<dbReference type="UniPathway" id="UPA00035">
    <property type="reaction ID" value="UER00040"/>
</dbReference>
<dbReference type="GO" id="GO:0004049">
    <property type="term" value="F:anthranilate synthase activity"/>
    <property type="evidence" value="ECO:0007669"/>
    <property type="project" value="UniProtKB-EC"/>
</dbReference>
<dbReference type="GO" id="GO:0046872">
    <property type="term" value="F:metal ion binding"/>
    <property type="evidence" value="ECO:0007669"/>
    <property type="project" value="UniProtKB-KW"/>
</dbReference>
<dbReference type="GO" id="GO:0000162">
    <property type="term" value="P:L-tryptophan biosynthetic process"/>
    <property type="evidence" value="ECO:0007669"/>
    <property type="project" value="UniProtKB-UniPathway"/>
</dbReference>
<dbReference type="Gene3D" id="3.60.120.10">
    <property type="entry name" value="Anthranilate synthase"/>
    <property type="match status" value="1"/>
</dbReference>
<dbReference type="InterPro" id="IPR005801">
    <property type="entry name" value="ADC_synthase"/>
</dbReference>
<dbReference type="InterPro" id="IPR019999">
    <property type="entry name" value="Anth_synth_I-like"/>
</dbReference>
<dbReference type="InterPro" id="IPR006805">
    <property type="entry name" value="Anth_synth_I_N"/>
</dbReference>
<dbReference type="InterPro" id="IPR005256">
    <property type="entry name" value="Anth_synth_I_PabB"/>
</dbReference>
<dbReference type="InterPro" id="IPR015890">
    <property type="entry name" value="Chorismate_C"/>
</dbReference>
<dbReference type="NCBIfam" id="TIGR00564">
    <property type="entry name" value="trpE_most"/>
    <property type="match status" value="1"/>
</dbReference>
<dbReference type="PANTHER" id="PTHR11236">
    <property type="entry name" value="AMINOBENZOATE/ANTHRANILATE SYNTHASE"/>
    <property type="match status" value="1"/>
</dbReference>
<dbReference type="PANTHER" id="PTHR11236:SF48">
    <property type="entry name" value="ISOCHORISMATE SYNTHASE MENF"/>
    <property type="match status" value="1"/>
</dbReference>
<dbReference type="Pfam" id="PF04715">
    <property type="entry name" value="Anth_synt_I_N"/>
    <property type="match status" value="1"/>
</dbReference>
<dbReference type="Pfam" id="PF00425">
    <property type="entry name" value="Chorismate_bind"/>
    <property type="match status" value="1"/>
</dbReference>
<dbReference type="PRINTS" id="PR00095">
    <property type="entry name" value="ANTSNTHASEI"/>
</dbReference>
<dbReference type="SUPFAM" id="SSF56322">
    <property type="entry name" value="ADC synthase"/>
    <property type="match status" value="1"/>
</dbReference>
<keyword id="KW-0028">Amino-acid biosynthesis</keyword>
<keyword id="KW-0057">Aromatic amino acid biosynthesis</keyword>
<keyword id="KW-0456">Lyase</keyword>
<keyword id="KW-0460">Magnesium</keyword>
<keyword id="KW-0479">Metal-binding</keyword>
<keyword id="KW-0822">Tryptophan biosynthesis</keyword>
<feature type="chain" id="PRO_0000154076" description="Anthranilate synthase component 1">
    <location>
        <begin position="1"/>
        <end position="508"/>
    </location>
</feature>
<feature type="binding site" evidence="2">
    <location>
        <position position="49"/>
    </location>
    <ligand>
        <name>L-tryptophan</name>
        <dbReference type="ChEBI" id="CHEBI:57912"/>
    </ligand>
</feature>
<feature type="binding site" evidence="2">
    <location>
        <begin position="282"/>
        <end position="284"/>
    </location>
    <ligand>
        <name>L-tryptophan</name>
        <dbReference type="ChEBI" id="CHEBI:57912"/>
    </ligand>
</feature>
<feature type="binding site" evidence="2">
    <location>
        <begin position="317"/>
        <end position="318"/>
    </location>
    <ligand>
        <name>chorismate</name>
        <dbReference type="ChEBI" id="CHEBI:29748"/>
    </ligand>
</feature>
<feature type="binding site" evidence="2">
    <location>
        <position position="344"/>
    </location>
    <ligand>
        <name>Mg(2+)</name>
        <dbReference type="ChEBI" id="CHEBI:18420"/>
    </ligand>
</feature>
<feature type="binding site" evidence="2">
    <location>
        <position position="432"/>
    </location>
    <ligand>
        <name>chorismate</name>
        <dbReference type="ChEBI" id="CHEBI:29748"/>
    </ligand>
</feature>
<feature type="binding site" evidence="2">
    <location>
        <position position="452"/>
    </location>
    <ligand>
        <name>chorismate</name>
        <dbReference type="ChEBI" id="CHEBI:29748"/>
    </ligand>
</feature>
<feature type="binding site" evidence="2">
    <location>
        <begin position="466"/>
        <end position="468"/>
    </location>
    <ligand>
        <name>chorismate</name>
        <dbReference type="ChEBI" id="CHEBI:29748"/>
    </ligand>
</feature>
<feature type="binding site" evidence="2">
    <location>
        <position position="468"/>
    </location>
    <ligand>
        <name>chorismate</name>
        <dbReference type="ChEBI" id="CHEBI:29748"/>
    </ligand>
</feature>
<feature type="binding site" evidence="2">
    <location>
        <position position="481"/>
    </location>
    <ligand>
        <name>Mg(2+)</name>
        <dbReference type="ChEBI" id="CHEBI:18420"/>
    </ligand>
</feature>
<organism>
    <name type="scientific">Bacillus caldotenax</name>
    <dbReference type="NCBI Taxonomy" id="1395"/>
    <lineage>
        <taxon>Bacteria</taxon>
        <taxon>Bacillati</taxon>
        <taxon>Bacillota</taxon>
        <taxon>Bacilli</taxon>
        <taxon>Bacillales</taxon>
        <taxon>Anoxybacillaceae</taxon>
        <taxon>Geobacillus</taxon>
        <taxon>Geobacillus thermoleovorans group</taxon>
    </lineage>
</organism>
<protein>
    <recommendedName>
        <fullName>Anthranilate synthase component 1</fullName>
        <shortName>AS</shortName>
        <shortName>ASI</shortName>
        <ecNumber>4.1.3.27</ecNumber>
    </recommendedName>
</protein>
<comment type="function">
    <text evidence="1">Part of a heterotetrameric complex that catalyzes the two-step biosynthesis of anthranilate, an intermediate in the biosynthesis of L-tryptophan. In the first step, the glutamine-binding beta subunit (TrpG) of anthranilate synthase (AS) provides the glutamine amidotransferase activity which generates ammonia as a substrate that, along with chorismate, is used in the second step, catalyzed by the large alpha subunit of AS (TrpE) to produce anthranilate. In the absence of TrpG, TrpE can synthesize anthranilate directly from chorismate and high concentrations of ammonia (By similarity).</text>
</comment>
<comment type="catalytic activity">
    <reaction>
        <text>chorismate + L-glutamine = anthranilate + pyruvate + L-glutamate + H(+)</text>
        <dbReference type="Rhea" id="RHEA:21732"/>
        <dbReference type="ChEBI" id="CHEBI:15361"/>
        <dbReference type="ChEBI" id="CHEBI:15378"/>
        <dbReference type="ChEBI" id="CHEBI:16567"/>
        <dbReference type="ChEBI" id="CHEBI:29748"/>
        <dbReference type="ChEBI" id="CHEBI:29985"/>
        <dbReference type="ChEBI" id="CHEBI:58359"/>
        <dbReference type="EC" id="4.1.3.27"/>
    </reaction>
</comment>
<comment type="cofactor">
    <cofactor evidence="2">
        <name>Mg(2+)</name>
        <dbReference type="ChEBI" id="CHEBI:18420"/>
    </cofactor>
    <text evidence="2">Binds 1 Mg(2+) ion per subunit.</text>
</comment>
<comment type="activity regulation">
    <text evidence="1">Feedback inhibited by tryptophan.</text>
</comment>
<comment type="pathway">
    <text>Amino-acid biosynthesis; L-tryptophan biosynthesis; L-tryptophan from chorismate: step 1/5.</text>
</comment>
<comment type="subunit">
    <text evidence="1">Heterotetramer consisting of two non-identical subunits: a beta subunit (TrpG) and a large alpha subunit (TrpE).</text>
</comment>
<comment type="similarity">
    <text evidence="3">Belongs to the anthranilate synthase component I family.</text>
</comment>